<sequence>MASIPEKQALILPLFEKLTSLTKETPPRAQWDPRLAGVGVLPRGTLFSCFHEKHLLEATKLFKVLYSPESFNDFLQLAREARVVVNEGLFAYAFSVAVIHRDDCKGVTLPPIQEVFPDRFVPSETINLAMKEAKNDPNSDIVVDVQETGNILDPEYKLAYFREDIGANAHHWYWHVVYPANWDAVFTGKTKDRKGELFYYMHQQMCARYDCERLSNGLTRMIPFHNFKEKLEGYAPHLTSLVSGLHYASRPAGLCLRDLSELEVQDVERWRDRILDAYHLNHVHDRENNDVVLDAEHGADILGAIIESSSDSVNRRFYGSLHNWGHVMMARMTDPDRSFEENPGVMSDTSTSLRDPIFYRWHRFVDNIFQEYKATLPSYTADDLNFPGLRIVSVQVNAKSQNRVRTFLKQEELVLSHGINFGTEHTVKVHYNHLDHEPFSYTINVDNSSGAVKHATVRIFLGPKCDELGNILEPNEQRRLFIELDKFHKELGPGLNTINRNSVESNVTVAHTYTFDELREGKLAPEDATEYCNCGWPRHMLIPKGTHRGMEFQLFVMLTDYTVDNPCGGAGKIVCADAVSYCGAKDQKYPDTKPMGFPFDRPTKIHTAEEILTPNMSLTDVVIQYVGHE</sequence>
<keyword id="KW-0186">Copper</keyword>
<keyword id="KW-1015">Disulfide bond</keyword>
<keyword id="KW-0325">Glycoprotein</keyword>
<keyword id="KW-0479">Metal-binding</keyword>
<keyword id="KW-0561">Oxygen transport</keyword>
<keyword id="KW-0964">Secreted</keyword>
<keyword id="KW-0813">Transport</keyword>
<reference key="1">
    <citation type="journal article" date="2000" name="J. Biol. Chem.">
        <title>Complete sequence of the 24-mer hemocyanin of the tarantula Eurypelma californicum. Structure and intramolecular evolution of the subunits.</title>
        <authorList>
            <person name="Voit R."/>
            <person name="Feldmaier-Fuchs G."/>
            <person name="Schweikardt T."/>
            <person name="Decker H."/>
            <person name="Burmester T."/>
        </authorList>
    </citation>
    <scope>NUCLEOTIDE SEQUENCE [MRNA]</scope>
    <source>
        <tissue>Heart</tissue>
    </source>
</reference>
<feature type="initiator methionine" description="Removed" evidence="1">
    <location>
        <position position="1"/>
    </location>
</feature>
<feature type="chain" id="PRO_0000204271" description="Hemocyanin G chain">
    <location>
        <begin position="2"/>
        <end position="629"/>
    </location>
</feature>
<feature type="binding site" evidence="1">
    <location>
        <position position="171"/>
    </location>
    <ligand>
        <name>Cu cation</name>
        <dbReference type="ChEBI" id="CHEBI:23378"/>
        <label>1</label>
    </ligand>
</feature>
<feature type="binding site" evidence="1">
    <location>
        <position position="175"/>
    </location>
    <ligand>
        <name>Cu cation</name>
        <dbReference type="ChEBI" id="CHEBI:23378"/>
        <label>1</label>
    </ligand>
</feature>
<feature type="binding site" evidence="1">
    <location>
        <position position="202"/>
    </location>
    <ligand>
        <name>Cu cation</name>
        <dbReference type="ChEBI" id="CHEBI:23378"/>
        <label>1</label>
    </ligand>
</feature>
<feature type="binding site" evidence="1">
    <location>
        <position position="322"/>
    </location>
    <ligand>
        <name>Cu cation</name>
        <dbReference type="ChEBI" id="CHEBI:23378"/>
        <label>2</label>
    </ligand>
</feature>
<feature type="binding site" evidence="1">
    <location>
        <position position="326"/>
    </location>
    <ligand>
        <name>Cu cation</name>
        <dbReference type="ChEBI" id="CHEBI:23378"/>
        <label>2</label>
    </ligand>
</feature>
<feature type="binding site" evidence="1">
    <location>
        <position position="362"/>
    </location>
    <ligand>
        <name>Cu cation</name>
        <dbReference type="ChEBI" id="CHEBI:23378"/>
        <label>2</label>
    </ligand>
</feature>
<feature type="glycosylation site" description="N-linked (GlcNAc...) asparagine" evidence="2">
    <location>
        <position position="447"/>
    </location>
</feature>
<feature type="glycosylation site" description="N-linked (GlcNAc...) asparagine" evidence="2">
    <location>
        <position position="506"/>
    </location>
</feature>
<feature type="glycosylation site" description="N-linked (GlcNAc...) asparagine" evidence="2">
    <location>
        <position position="615"/>
    </location>
</feature>
<feature type="disulfide bond" evidence="1">
    <location>
        <begin position="534"/>
        <end position="582"/>
    </location>
</feature>
<evidence type="ECO:0000250" key="1"/>
<evidence type="ECO:0000255" key="2"/>
<evidence type="ECO:0000305" key="3"/>
<gene>
    <name type="primary">HCG</name>
</gene>
<dbReference type="EMBL" id="AJ277492">
    <property type="protein sequence ID" value="CAB89497.1"/>
    <property type="molecule type" value="mRNA"/>
</dbReference>
<dbReference type="SMR" id="Q9NFL4"/>
<dbReference type="GlyCosmos" id="Q9NFL4">
    <property type="glycosylation" value="3 sites, No reported glycans"/>
</dbReference>
<dbReference type="GO" id="GO:0005576">
    <property type="term" value="C:extracellular region"/>
    <property type="evidence" value="ECO:0007669"/>
    <property type="project" value="UniProtKB-SubCell"/>
</dbReference>
<dbReference type="GO" id="GO:0031404">
    <property type="term" value="F:chloride ion binding"/>
    <property type="evidence" value="ECO:0000250"/>
    <property type="project" value="UniProtKB"/>
</dbReference>
<dbReference type="GO" id="GO:0005507">
    <property type="term" value="F:copper ion binding"/>
    <property type="evidence" value="ECO:0000250"/>
    <property type="project" value="UniProtKB"/>
</dbReference>
<dbReference type="GO" id="GO:0016491">
    <property type="term" value="F:oxidoreductase activity"/>
    <property type="evidence" value="ECO:0007669"/>
    <property type="project" value="InterPro"/>
</dbReference>
<dbReference type="GO" id="GO:0005344">
    <property type="term" value="F:oxygen carrier activity"/>
    <property type="evidence" value="ECO:0007669"/>
    <property type="project" value="UniProtKB-KW"/>
</dbReference>
<dbReference type="FunFam" id="1.10.1280.10:FF:000004">
    <property type="entry name" value="Hemocyanin subunit 2"/>
    <property type="match status" value="1"/>
</dbReference>
<dbReference type="FunFam" id="2.60.40.1520:FF:000001">
    <property type="entry name" value="Hemocyanin subunit 2"/>
    <property type="match status" value="1"/>
</dbReference>
<dbReference type="FunFam" id="1.20.1370.10:FF:000002">
    <property type="entry name" value="Hemocyanin subunit B"/>
    <property type="match status" value="1"/>
</dbReference>
<dbReference type="Gene3D" id="1.10.1280.10">
    <property type="entry name" value="Di-copper center containing domain from catechol oxidase"/>
    <property type="match status" value="1"/>
</dbReference>
<dbReference type="Gene3D" id="2.60.40.1520">
    <property type="entry name" value="Hemocyanin, C-terminal domain"/>
    <property type="match status" value="1"/>
</dbReference>
<dbReference type="Gene3D" id="1.20.1370.10">
    <property type="entry name" value="Hemocyanin, N-terminal domain"/>
    <property type="match status" value="1"/>
</dbReference>
<dbReference type="InterPro" id="IPR008922">
    <property type="entry name" value="Di-copper_centre_dom_sf"/>
</dbReference>
<dbReference type="InterPro" id="IPR013788">
    <property type="entry name" value="Hemocyanin/hexamerin"/>
</dbReference>
<dbReference type="InterPro" id="IPR000896">
    <property type="entry name" value="Hemocyanin/hexamerin_mid_dom"/>
</dbReference>
<dbReference type="InterPro" id="IPR005203">
    <property type="entry name" value="Hemocyanin_C"/>
</dbReference>
<dbReference type="InterPro" id="IPR037020">
    <property type="entry name" value="Hemocyanin_C_sf"/>
</dbReference>
<dbReference type="InterPro" id="IPR005204">
    <property type="entry name" value="Hemocyanin_N"/>
</dbReference>
<dbReference type="InterPro" id="IPR036697">
    <property type="entry name" value="Hemocyanin_N_sf"/>
</dbReference>
<dbReference type="InterPro" id="IPR014756">
    <property type="entry name" value="Ig_E-set"/>
</dbReference>
<dbReference type="InterPro" id="IPR002227">
    <property type="entry name" value="Tyrosinase_Cu-bd"/>
</dbReference>
<dbReference type="PANTHER" id="PTHR11511:SF5">
    <property type="entry name" value="FAT-BODY PROTEIN 1-RELATED"/>
    <property type="match status" value="1"/>
</dbReference>
<dbReference type="PANTHER" id="PTHR11511">
    <property type="entry name" value="LARVAL STORAGE PROTEIN/PHENOLOXIDASE"/>
    <property type="match status" value="1"/>
</dbReference>
<dbReference type="Pfam" id="PF03723">
    <property type="entry name" value="Hemocyanin_C"/>
    <property type="match status" value="1"/>
</dbReference>
<dbReference type="Pfam" id="PF00372">
    <property type="entry name" value="Hemocyanin_M"/>
    <property type="match status" value="1"/>
</dbReference>
<dbReference type="Pfam" id="PF03722">
    <property type="entry name" value="Hemocyanin_N"/>
    <property type="match status" value="1"/>
</dbReference>
<dbReference type="PRINTS" id="PR00187">
    <property type="entry name" value="HAEMOCYANIN"/>
</dbReference>
<dbReference type="SUPFAM" id="SSF48056">
    <property type="entry name" value="Di-copper centre-containing domain"/>
    <property type="match status" value="1"/>
</dbReference>
<dbReference type="SUPFAM" id="SSF81296">
    <property type="entry name" value="E set domains"/>
    <property type="match status" value="1"/>
</dbReference>
<dbReference type="SUPFAM" id="SSF48050">
    <property type="entry name" value="Hemocyanin, N-terminal domain"/>
    <property type="match status" value="1"/>
</dbReference>
<dbReference type="PROSITE" id="PS00209">
    <property type="entry name" value="HEMOCYANIN_1"/>
    <property type="match status" value="1"/>
</dbReference>
<dbReference type="PROSITE" id="PS00210">
    <property type="entry name" value="HEMOCYANIN_2"/>
    <property type="match status" value="1"/>
</dbReference>
<dbReference type="PROSITE" id="PS00498">
    <property type="entry name" value="TYROSINASE_2"/>
    <property type="match status" value="1"/>
</dbReference>
<organism>
    <name type="scientific">Aphonopelma sp.</name>
    <name type="common">American tarantula</name>
    <dbReference type="NCBI Taxonomy" id="29932"/>
    <lineage>
        <taxon>Eukaryota</taxon>
        <taxon>Metazoa</taxon>
        <taxon>Ecdysozoa</taxon>
        <taxon>Arthropoda</taxon>
        <taxon>Chelicerata</taxon>
        <taxon>Arachnida</taxon>
        <taxon>Araneae</taxon>
        <taxon>Mygalomorphae</taxon>
        <taxon>Theraphosidae</taxon>
        <taxon>Aphonopelma</taxon>
    </lineage>
</organism>
<name>HCYG_APHSP</name>
<proteinExistence type="evidence at transcript level"/>
<comment type="function">
    <text>Hemocyanins are copper-containing oxygen carriers occurring freely dissolved in the hemolymph of many mollusks and arthropods.</text>
</comment>
<comment type="subunit">
    <text>Tarantula hemocyanin is a 24-chain polymer with seven different chains identified.</text>
</comment>
<comment type="subcellular location">
    <subcellularLocation>
        <location>Secreted</location>
        <location>Extracellular space</location>
    </subcellularLocation>
</comment>
<comment type="tissue specificity">
    <text>Hemolymph.</text>
</comment>
<comment type="miscellaneous">
    <text>The two copper ions bound each have 3 nitrogen ligands (presumably contributed by His residues) and share a bridging ligand (possibly contributed by a Tyr residue) in addition to binding oxygen.</text>
</comment>
<comment type="similarity">
    <text evidence="3">Belongs to the tyrosinase family. Hemocyanin subfamily.</text>
</comment>
<accession>Q9NFL4</accession>
<protein>
    <recommendedName>
        <fullName>Hemocyanin G chain</fullName>
        <shortName>HcG</shortName>
    </recommendedName>
</protein>